<comment type="function">
    <text evidence="1">Forms oxaloacetate, a four-carbon dicarboxylic acid source for the tricarboxylic acid cycle.</text>
</comment>
<comment type="catalytic activity">
    <reaction evidence="1">
        <text>oxaloacetate + phosphate = phosphoenolpyruvate + hydrogencarbonate</text>
        <dbReference type="Rhea" id="RHEA:28370"/>
        <dbReference type="ChEBI" id="CHEBI:16452"/>
        <dbReference type="ChEBI" id="CHEBI:17544"/>
        <dbReference type="ChEBI" id="CHEBI:43474"/>
        <dbReference type="ChEBI" id="CHEBI:58702"/>
        <dbReference type="EC" id="4.1.1.31"/>
    </reaction>
</comment>
<comment type="cofactor">
    <cofactor evidence="1">
        <name>Mg(2+)</name>
        <dbReference type="ChEBI" id="CHEBI:18420"/>
    </cofactor>
</comment>
<comment type="similarity">
    <text evidence="1">Belongs to the PEPCase type 1 family.</text>
</comment>
<proteinExistence type="inferred from homology"/>
<dbReference type="EC" id="4.1.1.31" evidence="1"/>
<dbReference type="EMBL" id="CR543861">
    <property type="protein sequence ID" value="CAG70261.1"/>
    <property type="molecule type" value="Genomic_DNA"/>
</dbReference>
<dbReference type="RefSeq" id="WP_011182842.1">
    <property type="nucleotide sequence ID" value="NC_005966.1"/>
</dbReference>
<dbReference type="SMR" id="Q6F6Q6"/>
<dbReference type="STRING" id="202950.GCA_001485005_01596"/>
<dbReference type="GeneID" id="45235790"/>
<dbReference type="KEGG" id="aci:ACIAD3627"/>
<dbReference type="eggNOG" id="COG2352">
    <property type="taxonomic scope" value="Bacteria"/>
</dbReference>
<dbReference type="HOGENOM" id="CLU_006557_2_0_6"/>
<dbReference type="OrthoDB" id="9768133at2"/>
<dbReference type="BioCyc" id="ASP62977:ACIAD_RS16400-MONOMER"/>
<dbReference type="Proteomes" id="UP000000430">
    <property type="component" value="Chromosome"/>
</dbReference>
<dbReference type="GO" id="GO:0005829">
    <property type="term" value="C:cytosol"/>
    <property type="evidence" value="ECO:0007669"/>
    <property type="project" value="TreeGrafter"/>
</dbReference>
<dbReference type="GO" id="GO:0000287">
    <property type="term" value="F:magnesium ion binding"/>
    <property type="evidence" value="ECO:0007669"/>
    <property type="project" value="UniProtKB-UniRule"/>
</dbReference>
<dbReference type="GO" id="GO:0008964">
    <property type="term" value="F:phosphoenolpyruvate carboxylase activity"/>
    <property type="evidence" value="ECO:0007669"/>
    <property type="project" value="UniProtKB-UniRule"/>
</dbReference>
<dbReference type="GO" id="GO:0015977">
    <property type="term" value="P:carbon fixation"/>
    <property type="evidence" value="ECO:0007669"/>
    <property type="project" value="UniProtKB-UniRule"/>
</dbReference>
<dbReference type="GO" id="GO:0006107">
    <property type="term" value="P:oxaloacetate metabolic process"/>
    <property type="evidence" value="ECO:0007669"/>
    <property type="project" value="UniProtKB-UniRule"/>
</dbReference>
<dbReference type="GO" id="GO:0006099">
    <property type="term" value="P:tricarboxylic acid cycle"/>
    <property type="evidence" value="ECO:0007669"/>
    <property type="project" value="InterPro"/>
</dbReference>
<dbReference type="Gene3D" id="1.20.1440.90">
    <property type="entry name" value="Phosphoenolpyruvate/pyruvate domain"/>
    <property type="match status" value="1"/>
</dbReference>
<dbReference type="HAMAP" id="MF_00595">
    <property type="entry name" value="PEPcase_type1"/>
    <property type="match status" value="1"/>
</dbReference>
<dbReference type="InterPro" id="IPR021135">
    <property type="entry name" value="PEP_COase"/>
</dbReference>
<dbReference type="InterPro" id="IPR022805">
    <property type="entry name" value="PEP_COase_bac/pln-type"/>
</dbReference>
<dbReference type="InterPro" id="IPR018129">
    <property type="entry name" value="PEP_COase_Lys_AS"/>
</dbReference>
<dbReference type="InterPro" id="IPR033129">
    <property type="entry name" value="PEPCASE_His_AS"/>
</dbReference>
<dbReference type="InterPro" id="IPR015813">
    <property type="entry name" value="Pyrv/PenolPyrv_kinase-like_dom"/>
</dbReference>
<dbReference type="NCBIfam" id="NF000584">
    <property type="entry name" value="PRK00009.1"/>
    <property type="match status" value="1"/>
</dbReference>
<dbReference type="PANTHER" id="PTHR30523">
    <property type="entry name" value="PHOSPHOENOLPYRUVATE CARBOXYLASE"/>
    <property type="match status" value="1"/>
</dbReference>
<dbReference type="PANTHER" id="PTHR30523:SF6">
    <property type="entry name" value="PHOSPHOENOLPYRUVATE CARBOXYLASE"/>
    <property type="match status" value="1"/>
</dbReference>
<dbReference type="Pfam" id="PF00311">
    <property type="entry name" value="PEPcase"/>
    <property type="match status" value="1"/>
</dbReference>
<dbReference type="PRINTS" id="PR00150">
    <property type="entry name" value="PEPCARBXLASE"/>
</dbReference>
<dbReference type="SUPFAM" id="SSF51621">
    <property type="entry name" value="Phosphoenolpyruvate/pyruvate domain"/>
    <property type="match status" value="1"/>
</dbReference>
<dbReference type="PROSITE" id="PS00781">
    <property type="entry name" value="PEPCASE_1"/>
    <property type="match status" value="1"/>
</dbReference>
<dbReference type="PROSITE" id="PS00393">
    <property type="entry name" value="PEPCASE_2"/>
    <property type="match status" value="1"/>
</dbReference>
<organism>
    <name type="scientific">Acinetobacter baylyi (strain ATCC 33305 / BD413 / ADP1)</name>
    <dbReference type="NCBI Taxonomy" id="62977"/>
    <lineage>
        <taxon>Bacteria</taxon>
        <taxon>Pseudomonadati</taxon>
        <taxon>Pseudomonadota</taxon>
        <taxon>Gammaproteobacteria</taxon>
        <taxon>Moraxellales</taxon>
        <taxon>Moraxellaceae</taxon>
        <taxon>Acinetobacter</taxon>
    </lineage>
</organism>
<keyword id="KW-0120">Carbon dioxide fixation</keyword>
<keyword id="KW-0456">Lyase</keyword>
<keyword id="KW-0460">Magnesium</keyword>
<reference key="1">
    <citation type="journal article" date="2004" name="Nucleic Acids Res.">
        <title>Unique features revealed by the genome sequence of Acinetobacter sp. ADP1, a versatile and naturally transformation competent bacterium.</title>
        <authorList>
            <person name="Barbe V."/>
            <person name="Vallenet D."/>
            <person name="Fonknechten N."/>
            <person name="Kreimeyer A."/>
            <person name="Oztas S."/>
            <person name="Labarre L."/>
            <person name="Cruveiller S."/>
            <person name="Robert C."/>
            <person name="Duprat S."/>
            <person name="Wincker P."/>
            <person name="Ornston L.N."/>
            <person name="Weissenbach J."/>
            <person name="Marliere P."/>
            <person name="Cohen G.N."/>
            <person name="Medigue C."/>
        </authorList>
    </citation>
    <scope>NUCLEOTIDE SEQUENCE [LARGE SCALE GENOMIC DNA]</scope>
    <source>
        <strain>ATCC 33305 / BD413 / ADP1</strain>
    </source>
</reference>
<sequence length="894" mass="102249">MIQQIDAPLREDVRLLGNLLGETLKQHAGQDLFNQIEQIRALAKGARDGQAETEKKLEQLFLDLKDEEILPLTRAFSYFLNFANIAEQYHVVRSRRRSEFDEQGPPPNPLIHLFEKFKQNQISSKQLFQQVSNLSIELVLTAHPTEVSRRTLIQKYDDINEGLSKLDQQKLTPRERQQVLDDLKQLICSAWQTDEIRQNKPTPLDEAKWGFTTIEQTLWNAVPKFVRELDTLVHQHCDAHLPLDISPIRFASWMGGDRDGNPNVTHNVTQEVLWLSRWQAADLYLRDIEDLRWELSIQACSEELSQTLGRRHPEPYREYLRSTRERLKATRQWLSLRLQGLDGDDSQIIRHKQELLDPLLLCHRSLMECNLPEIANGKLLDFIYRVNCFGIELLKLDIRQESGRHRQAISAITEYLGLGNFESWTEQARQNFLIQELQSKRPLLPKYLNEPEGSLIEHPDVKEVFATMRTLAEQPPESLGAYIISMAEYASDVLAVLLLQKEAGILQPLRVVPLFETLKDLDGAAKTMETLFNMHWYKQHIQGKHEVMIGYSDSAKDAGFMSANWAQYRAQEELTAVAKSHGVQLTLFHGRGGSISRGGAPTQQALFSQPPGSISGAIRVTEQGEMIRFKFGLEGVALQNLEIYTAATLEATLLPPPVPKQEWRDLMHQMTDISVRVYRETVRENPHFVQYLRTVTPELELQMLPLGSRPAKRKVSGGIESLRAIPWVFAWTQIRLMLPAWLGTGAAINQVIDENKKAVLDEMLAEWPYFQTLIDMLEMVLSKSDANIALYYESHLTDNEDLKILGEMLRQRLNDAVQTLLSMKGESKLLSKNDVLDQAMQVRKPYLLPLHLLQAELMKRRRLYTAQSNAERTPVDHALMVSIAGIAAGLRNTG</sequence>
<accession>Q6F6Q6</accession>
<protein>
    <recommendedName>
        <fullName evidence="1">Phosphoenolpyruvate carboxylase</fullName>
        <shortName evidence="1">PEPC</shortName>
        <shortName evidence="1">PEPCase</shortName>
        <ecNumber evidence="1">4.1.1.31</ecNumber>
    </recommendedName>
</protein>
<name>CAPP_ACIAD</name>
<feature type="chain" id="PRO_0000166577" description="Phosphoenolpyruvate carboxylase">
    <location>
        <begin position="1"/>
        <end position="894"/>
    </location>
</feature>
<feature type="active site" evidence="1">
    <location>
        <position position="143"/>
    </location>
</feature>
<feature type="active site" evidence="1">
    <location>
        <position position="556"/>
    </location>
</feature>
<gene>
    <name evidence="1" type="primary">ppc</name>
    <name type="ordered locus">ACIAD3627</name>
</gene>
<evidence type="ECO:0000255" key="1">
    <source>
        <dbReference type="HAMAP-Rule" id="MF_00595"/>
    </source>
</evidence>